<comment type="function">
    <text evidence="1">Catalyzes the formation of sulfite from adenosine 5'-phosphosulfate (APS) using thioredoxin as an electron donor.</text>
</comment>
<comment type="catalytic activity">
    <reaction evidence="1">
        <text>[thioredoxin]-disulfide + sulfite + AMP + 2 H(+) = adenosine 5'-phosphosulfate + [thioredoxin]-dithiol</text>
        <dbReference type="Rhea" id="RHEA:21976"/>
        <dbReference type="Rhea" id="RHEA-COMP:10698"/>
        <dbReference type="Rhea" id="RHEA-COMP:10700"/>
        <dbReference type="ChEBI" id="CHEBI:15378"/>
        <dbReference type="ChEBI" id="CHEBI:17359"/>
        <dbReference type="ChEBI" id="CHEBI:29950"/>
        <dbReference type="ChEBI" id="CHEBI:50058"/>
        <dbReference type="ChEBI" id="CHEBI:58243"/>
        <dbReference type="ChEBI" id="CHEBI:456215"/>
        <dbReference type="EC" id="1.8.4.10"/>
    </reaction>
</comment>
<comment type="cofactor">
    <cofactor evidence="1">
        <name>[4Fe-4S] cluster</name>
        <dbReference type="ChEBI" id="CHEBI:49883"/>
    </cofactor>
    <text evidence="1">Binds 1 [4Fe-4S] cluster per subunit.</text>
</comment>
<comment type="pathway">
    <text evidence="1">Sulfur metabolism; hydrogen sulfide biosynthesis; sulfite from sulfate.</text>
</comment>
<comment type="subcellular location">
    <subcellularLocation>
        <location evidence="1">Cytoplasm</location>
    </subcellularLocation>
</comment>
<comment type="similarity">
    <text evidence="1">Belongs to the PAPS reductase family. CysH subfamily.</text>
</comment>
<sequence>MLTYETWKENSVSFSEEDETKGALSVLSWAYNEYKDEIVYACSFGVEGMVLLHLINQVNPSAKVVFLDTNVHFQETYELIKKVRERFPSLNIIEKQPELTLDEQAKLHGEKLWESNPNLCCSIRKILPLEKSLAAEKAWISGLRREQSETRKHTQFINQDRRFQSIKVCPLIHWTWKEVWRYVYKHSLPYNPLHDVGYPSIGCEKCTLPVGDGGNSRDGRWAGKMKTECGLHFQ</sequence>
<protein>
    <recommendedName>
        <fullName evidence="1">Adenosine 5'-phosphosulfate reductase</fullName>
        <shortName evidence="1">APS reductase</shortName>
        <ecNumber evidence="1">1.8.4.10</ecNumber>
    </recommendedName>
    <alternativeName>
        <fullName evidence="1">5'-adenylylsulfate reductase</fullName>
    </alternativeName>
    <alternativeName>
        <fullName evidence="1">Thioredoxin-dependent 5'-adenylylsulfate reductase</fullName>
    </alternativeName>
</protein>
<name>CYSH_BACMK</name>
<accession>A9VLI9</accession>
<feature type="chain" id="PRO_1000092170" description="Adenosine 5'-phosphosulfate reductase">
    <location>
        <begin position="1"/>
        <end position="234"/>
    </location>
</feature>
<feature type="active site" description="Nucleophile; cysteine thiosulfonate intermediate" evidence="1">
    <location>
        <position position="229"/>
    </location>
</feature>
<feature type="binding site" evidence="1">
    <location>
        <position position="120"/>
    </location>
    <ligand>
        <name>[4Fe-4S] cluster</name>
        <dbReference type="ChEBI" id="CHEBI:49883"/>
    </ligand>
</feature>
<feature type="binding site" evidence="1">
    <location>
        <position position="121"/>
    </location>
    <ligand>
        <name>[4Fe-4S] cluster</name>
        <dbReference type="ChEBI" id="CHEBI:49883"/>
    </ligand>
</feature>
<feature type="binding site" evidence="1">
    <location>
        <position position="203"/>
    </location>
    <ligand>
        <name>[4Fe-4S] cluster</name>
        <dbReference type="ChEBI" id="CHEBI:49883"/>
    </ligand>
</feature>
<feature type="binding site" evidence="1">
    <location>
        <position position="206"/>
    </location>
    <ligand>
        <name>[4Fe-4S] cluster</name>
        <dbReference type="ChEBI" id="CHEBI:49883"/>
    </ligand>
</feature>
<organism>
    <name type="scientific">Bacillus mycoides (strain KBAB4)</name>
    <name type="common">Bacillus weihenstephanensis</name>
    <dbReference type="NCBI Taxonomy" id="315730"/>
    <lineage>
        <taxon>Bacteria</taxon>
        <taxon>Bacillati</taxon>
        <taxon>Bacillota</taxon>
        <taxon>Bacilli</taxon>
        <taxon>Bacillales</taxon>
        <taxon>Bacillaceae</taxon>
        <taxon>Bacillus</taxon>
        <taxon>Bacillus cereus group</taxon>
    </lineage>
</organism>
<proteinExistence type="inferred from homology"/>
<reference key="1">
    <citation type="journal article" date="2008" name="Chem. Biol. Interact.">
        <title>Extending the Bacillus cereus group genomics to putative food-borne pathogens of different toxicity.</title>
        <authorList>
            <person name="Lapidus A."/>
            <person name="Goltsman E."/>
            <person name="Auger S."/>
            <person name="Galleron N."/>
            <person name="Segurens B."/>
            <person name="Dossat C."/>
            <person name="Land M.L."/>
            <person name="Broussolle V."/>
            <person name="Brillard J."/>
            <person name="Guinebretiere M.-H."/>
            <person name="Sanchis V."/>
            <person name="Nguen-the C."/>
            <person name="Lereclus D."/>
            <person name="Richardson P."/>
            <person name="Wincker P."/>
            <person name="Weissenbach J."/>
            <person name="Ehrlich S.D."/>
            <person name="Sorokin A."/>
        </authorList>
    </citation>
    <scope>NUCLEOTIDE SEQUENCE [LARGE SCALE GENOMIC DNA]</scope>
    <source>
        <strain>KBAB4</strain>
    </source>
</reference>
<gene>
    <name evidence="1" type="primary">cysH</name>
    <name type="ordered locus">BcerKBAB4_1344</name>
</gene>
<evidence type="ECO:0000255" key="1">
    <source>
        <dbReference type="HAMAP-Rule" id="MF_00063"/>
    </source>
</evidence>
<keyword id="KW-0963">Cytoplasm</keyword>
<keyword id="KW-0408">Iron</keyword>
<keyword id="KW-0411">Iron-sulfur</keyword>
<keyword id="KW-0479">Metal-binding</keyword>
<keyword id="KW-0560">Oxidoreductase</keyword>
<dbReference type="EC" id="1.8.4.10" evidence="1"/>
<dbReference type="EMBL" id="CP000903">
    <property type="protein sequence ID" value="ABY42591.1"/>
    <property type="molecule type" value="Genomic_DNA"/>
</dbReference>
<dbReference type="RefSeq" id="WP_002011694.1">
    <property type="nucleotide sequence ID" value="NC_010184.1"/>
</dbReference>
<dbReference type="SMR" id="A9VLI9"/>
<dbReference type="KEGG" id="bwe:BcerKBAB4_1344"/>
<dbReference type="eggNOG" id="COG0175">
    <property type="taxonomic scope" value="Bacteria"/>
</dbReference>
<dbReference type="HOGENOM" id="CLU_044089_2_1_9"/>
<dbReference type="Proteomes" id="UP000002154">
    <property type="component" value="Chromosome"/>
</dbReference>
<dbReference type="GO" id="GO:0005737">
    <property type="term" value="C:cytoplasm"/>
    <property type="evidence" value="ECO:0007669"/>
    <property type="project" value="UniProtKB-SubCell"/>
</dbReference>
<dbReference type="GO" id="GO:0051539">
    <property type="term" value="F:4 iron, 4 sulfur cluster binding"/>
    <property type="evidence" value="ECO:0007669"/>
    <property type="project" value="UniProtKB-UniRule"/>
</dbReference>
<dbReference type="GO" id="GO:0043866">
    <property type="term" value="F:adenylyl-sulfate reductase (thioredoxin) activity"/>
    <property type="evidence" value="ECO:0007669"/>
    <property type="project" value="UniProtKB-EC"/>
</dbReference>
<dbReference type="GO" id="GO:0046872">
    <property type="term" value="F:metal ion binding"/>
    <property type="evidence" value="ECO:0007669"/>
    <property type="project" value="UniProtKB-KW"/>
</dbReference>
<dbReference type="GO" id="GO:0004604">
    <property type="term" value="F:phosphoadenylyl-sulfate reductase (thioredoxin) activity"/>
    <property type="evidence" value="ECO:0007669"/>
    <property type="project" value="UniProtKB-UniRule"/>
</dbReference>
<dbReference type="GO" id="GO:0019344">
    <property type="term" value="P:cysteine biosynthetic process"/>
    <property type="evidence" value="ECO:0007669"/>
    <property type="project" value="InterPro"/>
</dbReference>
<dbReference type="GO" id="GO:0070814">
    <property type="term" value="P:hydrogen sulfide biosynthetic process"/>
    <property type="evidence" value="ECO:0007669"/>
    <property type="project" value="UniProtKB-UniRule"/>
</dbReference>
<dbReference type="GO" id="GO:0019379">
    <property type="term" value="P:sulfate assimilation, phosphoadenylyl sulfate reduction by phosphoadenylyl-sulfate reductase (thioredoxin)"/>
    <property type="evidence" value="ECO:0007669"/>
    <property type="project" value="UniProtKB-UniRule"/>
</dbReference>
<dbReference type="CDD" id="cd23945">
    <property type="entry name" value="PAPS_reductase"/>
    <property type="match status" value="1"/>
</dbReference>
<dbReference type="FunFam" id="3.40.50.620:FF:000095">
    <property type="entry name" value="Phosphoadenosine phosphosulfate reductase"/>
    <property type="match status" value="1"/>
</dbReference>
<dbReference type="Gene3D" id="3.40.50.620">
    <property type="entry name" value="HUPs"/>
    <property type="match status" value="1"/>
</dbReference>
<dbReference type="HAMAP" id="MF_00063">
    <property type="entry name" value="CysH"/>
    <property type="match status" value="1"/>
</dbReference>
<dbReference type="InterPro" id="IPR011798">
    <property type="entry name" value="APS_reductase"/>
</dbReference>
<dbReference type="InterPro" id="IPR004511">
    <property type="entry name" value="PAPS/APS_Rdtase"/>
</dbReference>
<dbReference type="InterPro" id="IPR002500">
    <property type="entry name" value="PAPS_reduct_dom"/>
</dbReference>
<dbReference type="InterPro" id="IPR014729">
    <property type="entry name" value="Rossmann-like_a/b/a_fold"/>
</dbReference>
<dbReference type="NCBIfam" id="TIGR02055">
    <property type="entry name" value="APS_reductase"/>
    <property type="match status" value="1"/>
</dbReference>
<dbReference type="NCBIfam" id="TIGR00434">
    <property type="entry name" value="cysH"/>
    <property type="match status" value="1"/>
</dbReference>
<dbReference type="NCBIfam" id="NF002537">
    <property type="entry name" value="PRK02090.1"/>
    <property type="match status" value="1"/>
</dbReference>
<dbReference type="PANTHER" id="PTHR46509">
    <property type="entry name" value="PHOSPHOADENOSINE PHOSPHOSULFATE REDUCTASE"/>
    <property type="match status" value="1"/>
</dbReference>
<dbReference type="PANTHER" id="PTHR46509:SF1">
    <property type="entry name" value="PHOSPHOADENOSINE PHOSPHOSULFATE REDUCTASE"/>
    <property type="match status" value="1"/>
</dbReference>
<dbReference type="Pfam" id="PF01507">
    <property type="entry name" value="PAPS_reduct"/>
    <property type="match status" value="1"/>
</dbReference>
<dbReference type="PIRSF" id="PIRSF000857">
    <property type="entry name" value="PAPS_reductase"/>
    <property type="match status" value="1"/>
</dbReference>
<dbReference type="SUPFAM" id="SSF52402">
    <property type="entry name" value="Adenine nucleotide alpha hydrolases-like"/>
    <property type="match status" value="1"/>
</dbReference>